<reference key="1">
    <citation type="journal article" date="1988" name="EMBO J.">
        <title>Isolation of chicken major histocompatibility complex class II (B-L) beta chain sequences: comparison with mammalian beta chains and expression in lymphoid organs.</title>
        <authorList>
            <person name="Bourlet Y."/>
            <person name="Behar G."/>
            <person name="Guillemot F."/>
            <person name="Frechin N."/>
            <person name="Billault A."/>
            <person name="Chausse A.M."/>
            <person name="Zoorob R."/>
            <person name="Auffray C."/>
        </authorList>
    </citation>
    <scope>NUCLEOTIDE SEQUENCE [GENOMIC DNA] (CLONE P14)</scope>
</reference>
<accession>P23068</accession>
<sequence length="231" mass="26278">FFQWSATVECHFLNGTERVRFLVRHVYNRQQYVHFDSDVGLFVADTVLGEPSAKLFNSQPDVLEKNRAAVEMLCNYNYEIVAPLTLQRREPKVRIFALQSGSLPQTDRLACYVTGFYPPEIEVKWFQNGQEETERVVSTDVIQNGDWTYQVLVVLEISPRHGDSYVCQVEHTSLQQPITQRWEPPGDVSRSKLLMGVGGFVLGLVYLALGIFFFLCSKKGQPDPTSPGILN</sequence>
<protein>
    <recommendedName>
        <fullName>Class II histocompatibility antigen, B-L beta chain</fullName>
    </recommendedName>
</protein>
<comment type="subcellular location">
    <subcellularLocation>
        <location evidence="3">Membrane</location>
        <topology evidence="3">Single-pass type I membrane protein</topology>
    </subcellularLocation>
</comment>
<comment type="similarity">
    <text evidence="3">Belongs to the MHC class II family.</text>
</comment>
<name>HB2L_CHICK</name>
<keyword id="KW-1064">Adaptive immunity</keyword>
<keyword id="KW-1015">Disulfide bond</keyword>
<keyword id="KW-0325">Glycoprotein</keyword>
<keyword id="KW-0391">Immunity</keyword>
<keyword id="KW-0472">Membrane</keyword>
<keyword id="KW-0491">MHC II</keyword>
<keyword id="KW-1185">Reference proteome</keyword>
<keyword id="KW-0812">Transmembrane</keyword>
<keyword id="KW-1133">Transmembrane helix</keyword>
<proteinExistence type="inferred from homology"/>
<feature type="chain" id="PRO_0000080756" description="Class II histocompatibility antigen, B-L beta chain">
    <location>
        <begin position="1" status="less than"/>
        <end position="231"/>
    </location>
</feature>
<feature type="topological domain" description="Extracellular" evidence="1">
    <location>
        <begin position="1" status="less than"/>
        <end position="194"/>
    </location>
</feature>
<feature type="transmembrane region" description="Helical" evidence="1">
    <location>
        <begin position="195"/>
        <end position="219"/>
    </location>
</feature>
<feature type="topological domain" description="Cytoplasmic" evidence="1">
    <location>
        <begin position="220"/>
        <end position="231"/>
    </location>
</feature>
<feature type="domain" description="Ig-like C1-type">
    <location>
        <begin position="91"/>
        <end position="179"/>
    </location>
</feature>
<feature type="region of interest" description="Beta-1">
    <location>
        <begin position="1" status="less than"/>
        <end position="89"/>
    </location>
</feature>
<feature type="region of interest" description="Beta-2">
    <location>
        <begin position="90"/>
        <end position="182"/>
    </location>
</feature>
<feature type="region of interest" description="Connecting peptide">
    <location>
        <begin position="183"/>
        <end position="194"/>
    </location>
</feature>
<feature type="glycosylation site" description="N-linked (GlcNAc...) asparagine" evidence="1">
    <location>
        <position position="14"/>
    </location>
</feature>
<feature type="disulfide bond" evidence="2">
    <location>
        <begin position="10"/>
        <end position="74"/>
    </location>
</feature>
<feature type="disulfide bond" evidence="2">
    <location>
        <begin position="111"/>
        <end position="167"/>
    </location>
</feature>
<feature type="non-terminal residue">
    <location>
        <position position="1"/>
    </location>
</feature>
<evidence type="ECO:0000255" key="1"/>
<evidence type="ECO:0000255" key="2">
    <source>
        <dbReference type="PROSITE-ProRule" id="PRU00114"/>
    </source>
</evidence>
<evidence type="ECO:0000305" key="3"/>
<organism>
    <name type="scientific">Gallus gallus</name>
    <name type="common">Chicken</name>
    <dbReference type="NCBI Taxonomy" id="9031"/>
    <lineage>
        <taxon>Eukaryota</taxon>
        <taxon>Metazoa</taxon>
        <taxon>Chordata</taxon>
        <taxon>Craniata</taxon>
        <taxon>Vertebrata</taxon>
        <taxon>Euteleostomi</taxon>
        <taxon>Archelosauria</taxon>
        <taxon>Archosauria</taxon>
        <taxon>Dinosauria</taxon>
        <taxon>Saurischia</taxon>
        <taxon>Theropoda</taxon>
        <taxon>Coelurosauria</taxon>
        <taxon>Aves</taxon>
        <taxon>Neognathae</taxon>
        <taxon>Galloanserae</taxon>
        <taxon>Galliformes</taxon>
        <taxon>Phasianidae</taxon>
        <taxon>Phasianinae</taxon>
        <taxon>Gallus</taxon>
    </lineage>
</organism>
<dbReference type="EMBL" id="X07447">
    <property type="status" value="NOT_ANNOTATED_CDS"/>
    <property type="molecule type" value="Genomic_DNA"/>
</dbReference>
<dbReference type="PIR" id="B49055">
    <property type="entry name" value="B49055"/>
</dbReference>
<dbReference type="PIR" id="S00475">
    <property type="entry name" value="HLCHBL"/>
</dbReference>
<dbReference type="SMR" id="P23068"/>
<dbReference type="FunCoup" id="P23068">
    <property type="interactions" value="27"/>
</dbReference>
<dbReference type="STRING" id="9031.ENSGALP00000045568"/>
<dbReference type="GlyGen" id="P23068">
    <property type="glycosylation" value="1 site"/>
</dbReference>
<dbReference type="PaxDb" id="9031-ENSGALP00000000193"/>
<dbReference type="VEuPathDB" id="HostDB:geneid_101748499"/>
<dbReference type="eggNOG" id="ENOG502RYBQ">
    <property type="taxonomic scope" value="Eukaryota"/>
</dbReference>
<dbReference type="InParanoid" id="P23068"/>
<dbReference type="PhylomeDB" id="P23068"/>
<dbReference type="Proteomes" id="UP000000539">
    <property type="component" value="Unassembled WGS sequence"/>
</dbReference>
<dbReference type="GO" id="GO:0031902">
    <property type="term" value="C:late endosome membrane"/>
    <property type="evidence" value="ECO:0000318"/>
    <property type="project" value="GO_Central"/>
</dbReference>
<dbReference type="GO" id="GO:0005765">
    <property type="term" value="C:lysosomal membrane"/>
    <property type="evidence" value="ECO:0000318"/>
    <property type="project" value="GO_Central"/>
</dbReference>
<dbReference type="GO" id="GO:0042613">
    <property type="term" value="C:MHC class II protein complex"/>
    <property type="evidence" value="ECO:0000318"/>
    <property type="project" value="GO_Central"/>
</dbReference>
<dbReference type="GO" id="GO:0023026">
    <property type="term" value="F:MHC class II protein complex binding"/>
    <property type="evidence" value="ECO:0000318"/>
    <property type="project" value="GO_Central"/>
</dbReference>
<dbReference type="GO" id="GO:0042605">
    <property type="term" value="F:peptide antigen binding"/>
    <property type="evidence" value="ECO:0000318"/>
    <property type="project" value="GO_Central"/>
</dbReference>
<dbReference type="GO" id="GO:0002250">
    <property type="term" value="P:adaptive immune response"/>
    <property type="evidence" value="ECO:0007669"/>
    <property type="project" value="UniProtKB-KW"/>
</dbReference>
<dbReference type="GO" id="GO:0019886">
    <property type="term" value="P:antigen processing and presentation of exogenous peptide antigen via MHC class II"/>
    <property type="evidence" value="ECO:0000318"/>
    <property type="project" value="GO_Central"/>
</dbReference>
<dbReference type="GO" id="GO:0002503">
    <property type="term" value="P:peptide antigen assembly with MHC class II protein complex"/>
    <property type="evidence" value="ECO:0000318"/>
    <property type="project" value="GO_Central"/>
</dbReference>
<dbReference type="GO" id="GO:0050778">
    <property type="term" value="P:positive regulation of immune response"/>
    <property type="evidence" value="ECO:0000318"/>
    <property type="project" value="GO_Central"/>
</dbReference>
<dbReference type="GO" id="GO:0050870">
    <property type="term" value="P:positive regulation of T cell activation"/>
    <property type="evidence" value="ECO:0000318"/>
    <property type="project" value="GO_Central"/>
</dbReference>
<dbReference type="CDD" id="cd05766">
    <property type="entry name" value="IgC1_MHC_II_beta"/>
    <property type="match status" value="1"/>
</dbReference>
<dbReference type="FunFam" id="3.10.320.10:FF:000001">
    <property type="entry name" value="HLA class II histocompatibility antigen, DRB1-1 beta chain"/>
    <property type="match status" value="1"/>
</dbReference>
<dbReference type="Gene3D" id="3.10.320.10">
    <property type="entry name" value="Class II Histocompatibility Antigen, M Beta Chain, Chain B, domain 1"/>
    <property type="match status" value="1"/>
</dbReference>
<dbReference type="Gene3D" id="2.60.40.10">
    <property type="entry name" value="Immunoglobulins"/>
    <property type="match status" value="1"/>
</dbReference>
<dbReference type="InterPro" id="IPR007110">
    <property type="entry name" value="Ig-like_dom"/>
</dbReference>
<dbReference type="InterPro" id="IPR036179">
    <property type="entry name" value="Ig-like_dom_sf"/>
</dbReference>
<dbReference type="InterPro" id="IPR013783">
    <property type="entry name" value="Ig-like_fold"/>
</dbReference>
<dbReference type="InterPro" id="IPR003006">
    <property type="entry name" value="Ig/MHC_CS"/>
</dbReference>
<dbReference type="InterPro" id="IPR003597">
    <property type="entry name" value="Ig_C1-set"/>
</dbReference>
<dbReference type="InterPro" id="IPR050160">
    <property type="entry name" value="MHC/Immunoglobulin"/>
</dbReference>
<dbReference type="InterPro" id="IPR011162">
    <property type="entry name" value="MHC_I/II-like_Ag-recog"/>
</dbReference>
<dbReference type="InterPro" id="IPR014745">
    <property type="entry name" value="MHC_II_a/b_N"/>
</dbReference>
<dbReference type="InterPro" id="IPR000353">
    <property type="entry name" value="MHC_II_b_N"/>
</dbReference>
<dbReference type="PANTHER" id="PTHR19944:SF99">
    <property type="entry name" value="HLA CLASS II HISTOCOMPATIBILITY ANTIGEN, DRB1 BETA CHAIN"/>
    <property type="match status" value="1"/>
</dbReference>
<dbReference type="PANTHER" id="PTHR19944">
    <property type="entry name" value="MHC CLASS II-RELATED"/>
    <property type="match status" value="1"/>
</dbReference>
<dbReference type="Pfam" id="PF07654">
    <property type="entry name" value="C1-set"/>
    <property type="match status" value="1"/>
</dbReference>
<dbReference type="Pfam" id="PF00969">
    <property type="entry name" value="MHC_II_beta"/>
    <property type="match status" value="1"/>
</dbReference>
<dbReference type="SMART" id="SM00407">
    <property type="entry name" value="IGc1"/>
    <property type="match status" value="1"/>
</dbReference>
<dbReference type="SMART" id="SM00921">
    <property type="entry name" value="MHC_II_beta"/>
    <property type="match status" value="1"/>
</dbReference>
<dbReference type="SUPFAM" id="SSF48726">
    <property type="entry name" value="Immunoglobulin"/>
    <property type="match status" value="1"/>
</dbReference>
<dbReference type="SUPFAM" id="SSF54452">
    <property type="entry name" value="MHC antigen-recognition domain"/>
    <property type="match status" value="1"/>
</dbReference>
<dbReference type="PROSITE" id="PS50835">
    <property type="entry name" value="IG_LIKE"/>
    <property type="match status" value="1"/>
</dbReference>
<dbReference type="PROSITE" id="PS00290">
    <property type="entry name" value="IG_MHC"/>
    <property type="match status" value="1"/>
</dbReference>